<name>ALF_NOSS1</name>
<gene>
    <name evidence="5" type="primary">fda</name>
    <name type="ordered locus">all4563</name>
</gene>
<proteinExistence type="evidence at protein level"/>
<protein>
    <recommendedName>
        <fullName evidence="1">Fructose-bisphosphate aldolase</fullName>
        <shortName evidence="1">FBP aldolase</shortName>
        <shortName evidence="1">FBPA</shortName>
        <ecNumber>4.1.2.13</ecNumber>
    </recommendedName>
    <alternativeName>
        <fullName evidence="1">Fructose-1,6-bisphosphate aldolase</fullName>
    </alternativeName>
</protein>
<organism>
    <name type="scientific">Nostoc sp. (strain PCC 7120 / SAG 25.82 / UTEX 2576)</name>
    <dbReference type="NCBI Taxonomy" id="103690"/>
    <lineage>
        <taxon>Bacteria</taxon>
        <taxon>Bacillati</taxon>
        <taxon>Cyanobacteriota</taxon>
        <taxon>Cyanophyceae</taxon>
        <taxon>Nostocales</taxon>
        <taxon>Nostocaceae</taxon>
        <taxon>Nostoc</taxon>
    </lineage>
</organism>
<feature type="initiator methionine" description="Removed" evidence="1">
    <location>
        <position position="1"/>
    </location>
</feature>
<feature type="chain" id="PRO_0000366199" description="Fructose-bisphosphate aldolase" evidence="1">
    <location>
        <begin position="2"/>
        <end position="359"/>
    </location>
</feature>
<feature type="active site" description="Proton donor" evidence="1">
    <location>
        <position position="83"/>
    </location>
</feature>
<feature type="binding site" evidence="1">
    <location>
        <position position="50"/>
    </location>
    <ligand>
        <name>D-glyceraldehyde 3-phosphate</name>
        <dbReference type="ChEBI" id="CHEBI:59776"/>
    </ligand>
</feature>
<feature type="binding site" evidence="1">
    <location>
        <position position="84"/>
    </location>
    <ligand>
        <name>Zn(2+)</name>
        <dbReference type="ChEBI" id="CHEBI:29105"/>
        <label>1</label>
        <note>catalytic</note>
    </ligand>
</feature>
<feature type="binding site" evidence="1">
    <location>
        <position position="105"/>
    </location>
    <ligand>
        <name>Zn(2+)</name>
        <dbReference type="ChEBI" id="CHEBI:29105"/>
        <label>2</label>
    </ligand>
</feature>
<feature type="binding site" evidence="1">
    <location>
        <position position="142"/>
    </location>
    <ligand>
        <name>Zn(2+)</name>
        <dbReference type="ChEBI" id="CHEBI:29105"/>
        <label>2</label>
    </ligand>
</feature>
<feature type="binding site" evidence="1">
    <location>
        <position position="198"/>
    </location>
    <ligand>
        <name>Zn(2+)</name>
        <dbReference type="ChEBI" id="CHEBI:29105"/>
        <label>1</label>
        <note>catalytic</note>
    </ligand>
</feature>
<feature type="binding site" evidence="1">
    <location>
        <position position="199"/>
    </location>
    <ligand>
        <name>dihydroxyacetone phosphate</name>
        <dbReference type="ChEBI" id="CHEBI:57642"/>
    </ligand>
</feature>
<feature type="binding site" evidence="1">
    <location>
        <position position="232"/>
    </location>
    <ligand>
        <name>Zn(2+)</name>
        <dbReference type="ChEBI" id="CHEBI:29105"/>
        <label>1</label>
        <note>catalytic</note>
    </ligand>
</feature>
<feature type="binding site" evidence="1">
    <location>
        <begin position="233"/>
        <end position="235"/>
    </location>
    <ligand>
        <name>dihydroxyacetone phosphate</name>
        <dbReference type="ChEBI" id="CHEBI:57642"/>
    </ligand>
</feature>
<feature type="binding site" evidence="1">
    <location>
        <begin position="275"/>
        <end position="278"/>
    </location>
    <ligand>
        <name>dihydroxyacetone phosphate</name>
        <dbReference type="ChEBI" id="CHEBI:57642"/>
    </ligand>
</feature>
<sequence length="359" mass="38617">MALVPLRLLLDHAAENGYGIPAFNVNNLEQIQAILKAAAETDSPVILQASRGARNYAGENFLRHLILAAVETYPEIPIVMHQDHGNAPSTCYSAIKNNFTSVMMDGSLEADAKTPASFEYNVNVTREVVNVAHALGVSVEGELGCLGSLETGAGEAEDGHGFEGTLDHSQLLTDPDEAVNFVEATQVDALAVAIGTSHGAYKFTRKPTGEILAISRIEEIHRRLPNTHLVMHGSSSVPEDLIALINEYGGAIPETYGVPVEEIQKGIKSGVRKVNIDTDNRLAITAAVREALAKNPKEFDPRHFLKPSITYMQKVCAERYVQFGTAGNASKIKQVSLETFAAKYAKGELNAISKAAAKV</sequence>
<evidence type="ECO:0000250" key="1">
    <source>
        <dbReference type="UniProtKB" id="Q55664"/>
    </source>
</evidence>
<evidence type="ECO:0000255" key="2"/>
<evidence type="ECO:0000269" key="3">
    <source ref="2"/>
</evidence>
<evidence type="ECO:0000305" key="4"/>
<evidence type="ECO:0000312" key="5">
    <source>
        <dbReference type="EMBL" id="BAB76262.1"/>
    </source>
</evidence>
<dbReference type="EC" id="4.1.2.13"/>
<dbReference type="EMBL" id="BA000019">
    <property type="protein sequence ID" value="BAB76262.1"/>
    <property type="molecule type" value="Genomic_DNA"/>
</dbReference>
<dbReference type="PIR" id="AC2376">
    <property type="entry name" value="AC2376"/>
</dbReference>
<dbReference type="SMR" id="Q8YNK2"/>
<dbReference type="STRING" id="103690.gene:10496613"/>
<dbReference type="KEGG" id="ana:all4563"/>
<dbReference type="eggNOG" id="COG0191">
    <property type="taxonomic scope" value="Bacteria"/>
</dbReference>
<dbReference type="OrthoDB" id="9803995at2"/>
<dbReference type="UniPathway" id="UPA00109">
    <property type="reaction ID" value="UER00183"/>
</dbReference>
<dbReference type="Proteomes" id="UP000002483">
    <property type="component" value="Chromosome"/>
</dbReference>
<dbReference type="GO" id="GO:0004332">
    <property type="term" value="F:fructose-bisphosphate aldolase activity"/>
    <property type="evidence" value="ECO:0007669"/>
    <property type="project" value="UniProtKB-EC"/>
</dbReference>
<dbReference type="GO" id="GO:0008270">
    <property type="term" value="F:zinc ion binding"/>
    <property type="evidence" value="ECO:0007669"/>
    <property type="project" value="InterPro"/>
</dbReference>
<dbReference type="GO" id="GO:0006096">
    <property type="term" value="P:glycolytic process"/>
    <property type="evidence" value="ECO:0007669"/>
    <property type="project" value="UniProtKB-UniPathway"/>
</dbReference>
<dbReference type="CDD" id="cd00947">
    <property type="entry name" value="TBP_aldolase_IIB"/>
    <property type="match status" value="1"/>
</dbReference>
<dbReference type="FunFam" id="3.20.20.70:FF:000111">
    <property type="entry name" value="Fructose-1,6-bisphosphate aldolase"/>
    <property type="match status" value="1"/>
</dbReference>
<dbReference type="Gene3D" id="3.20.20.70">
    <property type="entry name" value="Aldolase class I"/>
    <property type="match status" value="1"/>
</dbReference>
<dbReference type="InterPro" id="IPR013785">
    <property type="entry name" value="Aldolase_TIM"/>
</dbReference>
<dbReference type="InterPro" id="IPR050246">
    <property type="entry name" value="Class_II_FBP_aldolase"/>
</dbReference>
<dbReference type="InterPro" id="IPR000771">
    <property type="entry name" value="FBA_II"/>
</dbReference>
<dbReference type="InterPro" id="IPR006412">
    <property type="entry name" value="Fruct_bisP_Calv"/>
</dbReference>
<dbReference type="NCBIfam" id="TIGR00167">
    <property type="entry name" value="cbbA"/>
    <property type="match status" value="1"/>
</dbReference>
<dbReference type="NCBIfam" id="TIGR01521">
    <property type="entry name" value="FruBisAldo_II_B"/>
    <property type="match status" value="1"/>
</dbReference>
<dbReference type="PANTHER" id="PTHR30304">
    <property type="entry name" value="D-TAGATOSE-1,6-BISPHOSPHATE ALDOLASE"/>
    <property type="match status" value="1"/>
</dbReference>
<dbReference type="PANTHER" id="PTHR30304:SF0">
    <property type="entry name" value="D-TAGATOSE-1,6-BISPHOSPHATE ALDOLASE SUBUNIT GATY-RELATED"/>
    <property type="match status" value="1"/>
</dbReference>
<dbReference type="Pfam" id="PF01116">
    <property type="entry name" value="F_bP_aldolase"/>
    <property type="match status" value="1"/>
</dbReference>
<dbReference type="PIRSF" id="PIRSF001359">
    <property type="entry name" value="F_bP_aldolase_II"/>
    <property type="match status" value="1"/>
</dbReference>
<dbReference type="SUPFAM" id="SSF51569">
    <property type="entry name" value="Aldolase"/>
    <property type="match status" value="1"/>
</dbReference>
<dbReference type="PROSITE" id="PS00602">
    <property type="entry name" value="ALDOLASE_CLASS_II_1"/>
    <property type="match status" value="1"/>
</dbReference>
<dbReference type="PROSITE" id="PS00806">
    <property type="entry name" value="ALDOLASE_CLASS_II_2"/>
    <property type="match status" value="1"/>
</dbReference>
<reference evidence="5" key="1">
    <citation type="journal article" date="2001" name="DNA Res.">
        <title>Complete genomic sequence of the filamentous nitrogen-fixing cyanobacterium Anabaena sp. strain PCC 7120.</title>
        <authorList>
            <person name="Kaneko T."/>
            <person name="Nakamura Y."/>
            <person name="Wolk C.P."/>
            <person name="Kuritz T."/>
            <person name="Sasamoto S."/>
            <person name="Watanabe A."/>
            <person name="Iriguchi M."/>
            <person name="Ishikawa A."/>
            <person name="Kawashima K."/>
            <person name="Kimura T."/>
            <person name="Kishida Y."/>
            <person name="Kohara M."/>
            <person name="Matsumoto M."/>
            <person name="Matsuno A."/>
            <person name="Muraki A."/>
            <person name="Nakazaki N."/>
            <person name="Shimpo S."/>
            <person name="Sugimoto M."/>
            <person name="Takazawa M."/>
            <person name="Yamada M."/>
            <person name="Yasuda M."/>
            <person name="Tabata S."/>
        </authorList>
    </citation>
    <scope>NUCLEOTIDE SEQUENCE [LARGE SCALE GENOMIC DNA]</scope>
    <source>
        <strain>PCC 7120 / SAG 25.82 / UTEX 2576</strain>
    </source>
</reference>
<reference evidence="4" key="2">
    <citation type="submission" date="2008-12" db="UniProtKB">
        <authorList>
            <person name="Singh H."/>
            <person name="Rajaram H."/>
            <person name="Apte S.K."/>
        </authorList>
    </citation>
    <scope>PROTEIN SEQUENCE OF 282-289</scope>
    <scope>MASS SPECTROMETRY</scope>
</reference>
<comment type="function">
    <text evidence="1">Catalyzes the aldol condensation of dihydroxyacetone phosphate (DHAP or glycerone-phosphate) with glyceraldehyde 3-phosphate (G3P) to form fructose 1,6-bisphosphate (FBP) in gluconeogenesis and the reverse reaction in glycolysis.</text>
</comment>
<comment type="catalytic activity">
    <reaction evidence="1">
        <text>beta-D-fructose 1,6-bisphosphate = D-glyceraldehyde 3-phosphate + dihydroxyacetone phosphate</text>
        <dbReference type="Rhea" id="RHEA:14729"/>
        <dbReference type="ChEBI" id="CHEBI:32966"/>
        <dbReference type="ChEBI" id="CHEBI:57642"/>
        <dbReference type="ChEBI" id="CHEBI:59776"/>
        <dbReference type="EC" id="4.1.2.13"/>
    </reaction>
</comment>
<comment type="cofactor">
    <cofactor evidence="1">
        <name>Zn(2+)</name>
        <dbReference type="ChEBI" id="CHEBI:29105"/>
    </cofactor>
    <text evidence="1">Binds 2 Zn(2+) ions per subunit. One is catalytic and the other provides a structural contribution.</text>
</comment>
<comment type="pathway">
    <text evidence="1">Carbohydrate degradation; glycolysis; D-glyceraldehyde 3-phosphate and glycerone phosphate from D-glucose: step 4/4.</text>
</comment>
<comment type="mass spectrometry" mass="38764.0" error="1.0" method="MALDI" evidence="3"/>
<comment type="similarity">
    <text evidence="2">Belongs to the class II fructose-bisphosphate aldolase family.</text>
</comment>
<keyword id="KW-0903">Direct protein sequencing</keyword>
<keyword id="KW-0324">Glycolysis</keyword>
<keyword id="KW-0456">Lyase</keyword>
<keyword id="KW-0479">Metal-binding</keyword>
<keyword id="KW-1185">Reference proteome</keyword>
<keyword id="KW-0862">Zinc</keyword>
<accession>Q8YNK2</accession>